<gene>
    <name type="primary">Crygd</name>
</gene>
<accession>P04342</accession>
<accession>O89027</accession>
<accession>Q6PGI0</accession>
<protein>
    <recommendedName>
        <fullName>Gamma-crystallin D</fullName>
    </recommendedName>
    <alternativeName>
        <fullName>Gamma-D-crystallin</fullName>
    </alternativeName>
    <alternativeName>
        <fullName>Gamma-crystallin 1</fullName>
    </alternativeName>
</protein>
<sequence length="174" mass="21118">MGKITFYEDRGFQGRHYECSTDHSNLQPYFSRCNSVRVDSGCWMLYEQPNFTGCQYFLRRGDYPDYQQWMGFSDSVRSCRLIPHAGSHRIRLYEREEYRGQMIEFTEDCPSLQDRFHFNEIYSLNVLEGCWVLYDMTNYRGRQYLLRPGEYRRYHDWGAMNARVGSLRRVMDFY</sequence>
<comment type="function">
    <text>Crystallins are the dominant structural components of the vertebrate eye lens.</text>
</comment>
<comment type="tissue specificity">
    <text evidence="2">Detected in the superior olivary complex of the auditory hindbrain.</text>
</comment>
<comment type="domain">
    <text>Has a two-domain beta-structure, folded into four very similar Greek key motifs.</text>
</comment>
<comment type="miscellaneous">
    <text>There are six different gamma crystallins identified in mouse lens.</text>
</comment>
<comment type="similarity">
    <text evidence="3">Belongs to the beta/gamma-crystallin family.</text>
</comment>
<dbReference type="EMBL" id="K02583">
    <property type="protein sequence ID" value="AAA37475.1"/>
    <property type="molecule type" value="mRNA"/>
</dbReference>
<dbReference type="EMBL" id="AK136286">
    <property type="protein sequence ID" value="BAE22915.1"/>
    <property type="molecule type" value="mRNA"/>
</dbReference>
<dbReference type="EMBL" id="AC158958">
    <property type="status" value="NOT_ANNOTATED_CDS"/>
    <property type="molecule type" value="Genomic_DNA"/>
</dbReference>
<dbReference type="EMBL" id="BC057013">
    <property type="protein sequence ID" value="AAH57013.1"/>
    <property type="molecule type" value="mRNA"/>
</dbReference>
<dbReference type="EMBL" id="BC132116">
    <property type="protein sequence ID" value="AAI32117.1"/>
    <property type="molecule type" value="mRNA"/>
</dbReference>
<dbReference type="EMBL" id="BC132118">
    <property type="protein sequence ID" value="AAI32119.1"/>
    <property type="molecule type" value="mRNA"/>
</dbReference>
<dbReference type="EMBL" id="AJ224342">
    <property type="protein sequence ID" value="CAA11908.1"/>
    <property type="molecule type" value="Genomic_DNA"/>
</dbReference>
<dbReference type="CCDS" id="CCDS35599.1"/>
<dbReference type="PIR" id="A02932">
    <property type="entry name" value="CYMSG1"/>
</dbReference>
<dbReference type="RefSeq" id="NP_031802.2">
    <property type="nucleotide sequence ID" value="NM_007776.3"/>
</dbReference>
<dbReference type="SMR" id="P04342"/>
<dbReference type="BioGRID" id="198919">
    <property type="interactions" value="1"/>
</dbReference>
<dbReference type="FunCoup" id="P04342">
    <property type="interactions" value="985"/>
</dbReference>
<dbReference type="STRING" id="10090.ENSMUSP00000045327"/>
<dbReference type="PhosphoSitePlus" id="P04342"/>
<dbReference type="PaxDb" id="10090-ENSMUSP00000045327"/>
<dbReference type="ProteomicsDB" id="284169"/>
<dbReference type="DNASU" id="12967"/>
<dbReference type="Ensembl" id="ENSMUST00000045028.15">
    <property type="protein sequence ID" value="ENSMUSP00000045327.9"/>
    <property type="gene ID" value="ENSMUSG00000067299.12"/>
</dbReference>
<dbReference type="GeneID" id="12967"/>
<dbReference type="KEGG" id="mmu:12967"/>
<dbReference type="UCSC" id="uc007bhg.2">
    <property type="organism name" value="mouse"/>
</dbReference>
<dbReference type="AGR" id="MGI:88524"/>
<dbReference type="CTD" id="1421"/>
<dbReference type="MGI" id="MGI:88524">
    <property type="gene designation" value="Crygd"/>
</dbReference>
<dbReference type="VEuPathDB" id="HostDB:ENSMUSG00000067299"/>
<dbReference type="eggNOG" id="ENOG502RXJY">
    <property type="taxonomic scope" value="Eukaryota"/>
</dbReference>
<dbReference type="GeneTree" id="ENSGT00940000163272"/>
<dbReference type="HOGENOM" id="CLU_081883_1_1_1"/>
<dbReference type="InParanoid" id="P04342"/>
<dbReference type="OMA" id="DCADLHI"/>
<dbReference type="OrthoDB" id="8407241at2759"/>
<dbReference type="PhylomeDB" id="P04342"/>
<dbReference type="BioGRID-ORCS" id="12967">
    <property type="hits" value="2 hits in 79 CRISPR screens"/>
</dbReference>
<dbReference type="ChiTaRS" id="Crygd">
    <property type="organism name" value="mouse"/>
</dbReference>
<dbReference type="PRO" id="PR:P04342"/>
<dbReference type="Proteomes" id="UP000000589">
    <property type="component" value="Chromosome 1"/>
</dbReference>
<dbReference type="RNAct" id="P04342">
    <property type="molecule type" value="protein"/>
</dbReference>
<dbReference type="Bgee" id="ENSMUSG00000067299">
    <property type="expression patterns" value="Expressed in epithelium of lens and 51 other cell types or tissues"/>
</dbReference>
<dbReference type="ExpressionAtlas" id="P04342">
    <property type="expression patterns" value="baseline and differential"/>
</dbReference>
<dbReference type="GO" id="GO:0005737">
    <property type="term" value="C:cytoplasm"/>
    <property type="evidence" value="ECO:0000314"/>
    <property type="project" value="MGI"/>
</dbReference>
<dbReference type="GO" id="GO:0005634">
    <property type="term" value="C:nucleus"/>
    <property type="evidence" value="ECO:0000314"/>
    <property type="project" value="MGI"/>
</dbReference>
<dbReference type="GO" id="GO:0005212">
    <property type="term" value="F:structural constituent of eye lens"/>
    <property type="evidence" value="ECO:0000314"/>
    <property type="project" value="MGI"/>
</dbReference>
<dbReference type="GO" id="GO:0001654">
    <property type="term" value="P:eye development"/>
    <property type="evidence" value="ECO:0000315"/>
    <property type="project" value="MGI"/>
</dbReference>
<dbReference type="GO" id="GO:0002088">
    <property type="term" value="P:lens development in camera-type eye"/>
    <property type="evidence" value="ECO:0000315"/>
    <property type="project" value="MGI"/>
</dbReference>
<dbReference type="GO" id="GO:0070306">
    <property type="term" value="P:lens fiber cell differentiation"/>
    <property type="evidence" value="ECO:0000315"/>
    <property type="project" value="MGI"/>
</dbReference>
<dbReference type="FunFam" id="2.60.20.10:FF:000001">
    <property type="entry name" value="Crystallin gamma S"/>
    <property type="match status" value="1"/>
</dbReference>
<dbReference type="FunFam" id="2.60.20.10:FF:000003">
    <property type="entry name" value="Crystallin gamma S"/>
    <property type="match status" value="1"/>
</dbReference>
<dbReference type="Gene3D" id="2.60.20.10">
    <property type="entry name" value="Crystallins"/>
    <property type="match status" value="2"/>
</dbReference>
<dbReference type="InterPro" id="IPR050252">
    <property type="entry name" value="Beta/Gamma-Crystallin"/>
</dbReference>
<dbReference type="InterPro" id="IPR001064">
    <property type="entry name" value="Beta/gamma_crystallin"/>
</dbReference>
<dbReference type="InterPro" id="IPR011024">
    <property type="entry name" value="G_crystallin-like"/>
</dbReference>
<dbReference type="PANTHER" id="PTHR11818">
    <property type="entry name" value="BETA/GAMMA CRYSTALLIN"/>
    <property type="match status" value="1"/>
</dbReference>
<dbReference type="PANTHER" id="PTHR11818:SF119">
    <property type="entry name" value="GAMMA-CRYSTALLIN D"/>
    <property type="match status" value="1"/>
</dbReference>
<dbReference type="Pfam" id="PF00030">
    <property type="entry name" value="Crystall"/>
    <property type="match status" value="2"/>
</dbReference>
<dbReference type="PRINTS" id="PR01367">
    <property type="entry name" value="BGCRYSTALLIN"/>
</dbReference>
<dbReference type="SMART" id="SM00247">
    <property type="entry name" value="XTALbg"/>
    <property type="match status" value="2"/>
</dbReference>
<dbReference type="SUPFAM" id="SSF49695">
    <property type="entry name" value="gamma-Crystallin-like"/>
    <property type="match status" value="1"/>
</dbReference>
<dbReference type="PROSITE" id="PS50915">
    <property type="entry name" value="CRYSTALLIN_BETA_GAMMA"/>
    <property type="match status" value="4"/>
</dbReference>
<proteinExistence type="evidence at transcript level"/>
<evidence type="ECO:0000255" key="1">
    <source>
        <dbReference type="PROSITE-ProRule" id="PRU00028"/>
    </source>
</evidence>
<evidence type="ECO:0000269" key="2">
    <source>
    </source>
</evidence>
<evidence type="ECO:0000305" key="3"/>
<reference key="1">
    <citation type="journal article" date="1984" name="Proc. Natl. Acad. Sci. U.S.A.">
        <title>Gamma-crystallin family of the mouse lens: structural and evolutionary relationships.</title>
        <authorList>
            <person name="Breitman M.L."/>
            <person name="Lok S."/>
            <person name="Wistow G."/>
            <person name="Piatigorsky J."/>
            <person name="Treton J.A."/>
            <person name="Gold R.J.M."/>
            <person name="Tsui L.-C."/>
        </authorList>
    </citation>
    <scope>NUCLEOTIDE SEQUENCE [MRNA]</scope>
</reference>
<reference key="2">
    <citation type="journal article" date="2005" name="Science">
        <title>The transcriptional landscape of the mammalian genome.</title>
        <authorList>
            <person name="Carninci P."/>
            <person name="Kasukawa T."/>
            <person name="Katayama S."/>
            <person name="Gough J."/>
            <person name="Frith M.C."/>
            <person name="Maeda N."/>
            <person name="Oyama R."/>
            <person name="Ravasi T."/>
            <person name="Lenhard B."/>
            <person name="Wells C."/>
            <person name="Kodzius R."/>
            <person name="Shimokawa K."/>
            <person name="Bajic V.B."/>
            <person name="Brenner S.E."/>
            <person name="Batalov S."/>
            <person name="Forrest A.R."/>
            <person name="Zavolan M."/>
            <person name="Davis M.J."/>
            <person name="Wilming L.G."/>
            <person name="Aidinis V."/>
            <person name="Allen J.E."/>
            <person name="Ambesi-Impiombato A."/>
            <person name="Apweiler R."/>
            <person name="Aturaliya R.N."/>
            <person name="Bailey T.L."/>
            <person name="Bansal M."/>
            <person name="Baxter L."/>
            <person name="Beisel K.W."/>
            <person name="Bersano T."/>
            <person name="Bono H."/>
            <person name="Chalk A.M."/>
            <person name="Chiu K.P."/>
            <person name="Choudhary V."/>
            <person name="Christoffels A."/>
            <person name="Clutterbuck D.R."/>
            <person name="Crowe M.L."/>
            <person name="Dalla E."/>
            <person name="Dalrymple B.P."/>
            <person name="de Bono B."/>
            <person name="Della Gatta G."/>
            <person name="di Bernardo D."/>
            <person name="Down T."/>
            <person name="Engstrom P."/>
            <person name="Fagiolini M."/>
            <person name="Faulkner G."/>
            <person name="Fletcher C.F."/>
            <person name="Fukushima T."/>
            <person name="Furuno M."/>
            <person name="Futaki S."/>
            <person name="Gariboldi M."/>
            <person name="Georgii-Hemming P."/>
            <person name="Gingeras T.R."/>
            <person name="Gojobori T."/>
            <person name="Green R.E."/>
            <person name="Gustincich S."/>
            <person name="Harbers M."/>
            <person name="Hayashi Y."/>
            <person name="Hensch T.K."/>
            <person name="Hirokawa N."/>
            <person name="Hill D."/>
            <person name="Huminiecki L."/>
            <person name="Iacono M."/>
            <person name="Ikeo K."/>
            <person name="Iwama A."/>
            <person name="Ishikawa T."/>
            <person name="Jakt M."/>
            <person name="Kanapin A."/>
            <person name="Katoh M."/>
            <person name="Kawasawa Y."/>
            <person name="Kelso J."/>
            <person name="Kitamura H."/>
            <person name="Kitano H."/>
            <person name="Kollias G."/>
            <person name="Krishnan S.P."/>
            <person name="Kruger A."/>
            <person name="Kummerfeld S.K."/>
            <person name="Kurochkin I.V."/>
            <person name="Lareau L.F."/>
            <person name="Lazarevic D."/>
            <person name="Lipovich L."/>
            <person name="Liu J."/>
            <person name="Liuni S."/>
            <person name="McWilliam S."/>
            <person name="Madan Babu M."/>
            <person name="Madera M."/>
            <person name="Marchionni L."/>
            <person name="Matsuda H."/>
            <person name="Matsuzawa S."/>
            <person name="Miki H."/>
            <person name="Mignone F."/>
            <person name="Miyake S."/>
            <person name="Morris K."/>
            <person name="Mottagui-Tabar S."/>
            <person name="Mulder N."/>
            <person name="Nakano N."/>
            <person name="Nakauchi H."/>
            <person name="Ng P."/>
            <person name="Nilsson R."/>
            <person name="Nishiguchi S."/>
            <person name="Nishikawa S."/>
            <person name="Nori F."/>
            <person name="Ohara O."/>
            <person name="Okazaki Y."/>
            <person name="Orlando V."/>
            <person name="Pang K.C."/>
            <person name="Pavan W.J."/>
            <person name="Pavesi G."/>
            <person name="Pesole G."/>
            <person name="Petrovsky N."/>
            <person name="Piazza S."/>
            <person name="Reed J."/>
            <person name="Reid J.F."/>
            <person name="Ring B.Z."/>
            <person name="Ringwald M."/>
            <person name="Rost B."/>
            <person name="Ruan Y."/>
            <person name="Salzberg S.L."/>
            <person name="Sandelin A."/>
            <person name="Schneider C."/>
            <person name="Schoenbach C."/>
            <person name="Sekiguchi K."/>
            <person name="Semple C.A."/>
            <person name="Seno S."/>
            <person name="Sessa L."/>
            <person name="Sheng Y."/>
            <person name="Shibata Y."/>
            <person name="Shimada H."/>
            <person name="Shimada K."/>
            <person name="Silva D."/>
            <person name="Sinclair B."/>
            <person name="Sperling S."/>
            <person name="Stupka E."/>
            <person name="Sugiura K."/>
            <person name="Sultana R."/>
            <person name="Takenaka Y."/>
            <person name="Taki K."/>
            <person name="Tammoja K."/>
            <person name="Tan S.L."/>
            <person name="Tang S."/>
            <person name="Taylor M.S."/>
            <person name="Tegner J."/>
            <person name="Teichmann S.A."/>
            <person name="Ueda H.R."/>
            <person name="van Nimwegen E."/>
            <person name="Verardo R."/>
            <person name="Wei C.L."/>
            <person name="Yagi K."/>
            <person name="Yamanishi H."/>
            <person name="Zabarovsky E."/>
            <person name="Zhu S."/>
            <person name="Zimmer A."/>
            <person name="Hide W."/>
            <person name="Bult C."/>
            <person name="Grimmond S.M."/>
            <person name="Teasdale R.D."/>
            <person name="Liu E.T."/>
            <person name="Brusic V."/>
            <person name="Quackenbush J."/>
            <person name="Wahlestedt C."/>
            <person name="Mattick J.S."/>
            <person name="Hume D.A."/>
            <person name="Kai C."/>
            <person name="Sasaki D."/>
            <person name="Tomaru Y."/>
            <person name="Fukuda S."/>
            <person name="Kanamori-Katayama M."/>
            <person name="Suzuki M."/>
            <person name="Aoki J."/>
            <person name="Arakawa T."/>
            <person name="Iida J."/>
            <person name="Imamura K."/>
            <person name="Itoh M."/>
            <person name="Kato T."/>
            <person name="Kawaji H."/>
            <person name="Kawagashira N."/>
            <person name="Kawashima T."/>
            <person name="Kojima M."/>
            <person name="Kondo S."/>
            <person name="Konno H."/>
            <person name="Nakano K."/>
            <person name="Ninomiya N."/>
            <person name="Nishio T."/>
            <person name="Okada M."/>
            <person name="Plessy C."/>
            <person name="Shibata K."/>
            <person name="Shiraki T."/>
            <person name="Suzuki S."/>
            <person name="Tagami M."/>
            <person name="Waki K."/>
            <person name="Watahiki A."/>
            <person name="Okamura-Oho Y."/>
            <person name="Suzuki H."/>
            <person name="Kawai J."/>
            <person name="Hayashizaki Y."/>
        </authorList>
    </citation>
    <scope>NUCLEOTIDE SEQUENCE [LARGE SCALE MRNA]</scope>
    <source>
        <strain>C57BL/6J</strain>
        <tissue>Eye</tissue>
    </source>
</reference>
<reference key="3">
    <citation type="journal article" date="2009" name="PLoS Biol.">
        <title>Lineage-specific biology revealed by a finished genome assembly of the mouse.</title>
        <authorList>
            <person name="Church D.M."/>
            <person name="Goodstadt L."/>
            <person name="Hillier L.W."/>
            <person name="Zody M.C."/>
            <person name="Goldstein S."/>
            <person name="She X."/>
            <person name="Bult C.J."/>
            <person name="Agarwala R."/>
            <person name="Cherry J.L."/>
            <person name="DiCuccio M."/>
            <person name="Hlavina W."/>
            <person name="Kapustin Y."/>
            <person name="Meric P."/>
            <person name="Maglott D."/>
            <person name="Birtle Z."/>
            <person name="Marques A.C."/>
            <person name="Graves T."/>
            <person name="Zhou S."/>
            <person name="Teague B."/>
            <person name="Potamousis K."/>
            <person name="Churas C."/>
            <person name="Place M."/>
            <person name="Herschleb J."/>
            <person name="Runnheim R."/>
            <person name="Forrest D."/>
            <person name="Amos-Landgraf J."/>
            <person name="Schwartz D.C."/>
            <person name="Cheng Z."/>
            <person name="Lindblad-Toh K."/>
            <person name="Eichler E.E."/>
            <person name="Ponting C.P."/>
        </authorList>
    </citation>
    <scope>NUCLEOTIDE SEQUENCE [LARGE SCALE GENOMIC DNA]</scope>
    <source>
        <strain>C57BL/6J</strain>
    </source>
</reference>
<reference key="4">
    <citation type="journal article" date="2004" name="Genome Res.">
        <title>The status, quality, and expansion of the NIH full-length cDNA project: the Mammalian Gene Collection (MGC).</title>
        <authorList>
            <consortium name="The MGC Project Team"/>
        </authorList>
    </citation>
    <scope>NUCLEOTIDE SEQUENCE [LARGE SCALE MRNA]</scope>
    <source>
        <strain>C57BL/6J</strain>
        <tissue>Brain</tissue>
    </source>
</reference>
<reference key="5">
    <citation type="journal article" date="1998" name="Genomics">
        <title>Three murine cataract mutants (Cat2) are defective in different gamma-crystallin genes.</title>
        <authorList>
            <person name="Klopp N."/>
            <person name="Favor J."/>
            <person name="Loester J."/>
            <person name="Lutz R.B."/>
            <person name="Neuhaeuser-Klaus A."/>
            <person name="Prescott A."/>
            <person name="Pretsch W."/>
            <person name="Quinlan R.A."/>
            <person name="Sandilands A."/>
            <person name="Vrensen G.F.J.M."/>
            <person name="Graw J."/>
        </authorList>
    </citation>
    <scope>NUCLEOTIDE SEQUENCE [GENOMIC DNA] OF 4-105</scope>
    <source>
        <strain>102 X C3H</strain>
    </source>
</reference>
<reference key="6">
    <citation type="journal article" date="2016" name="PLoS ONE">
        <title>Functional Role of gamma-Crystallin N in the Auditory Hindbrain.</title>
        <authorList>
            <person name="Hartwich H."/>
            <person name="Rosengauer E."/>
            <person name="Ruettiger L."/>
            <person name="Wilms V."/>
            <person name="Waterholter S.K."/>
            <person name="Nothwang H.G."/>
        </authorList>
    </citation>
    <scope>TISSUE SPECIFICITY</scope>
</reference>
<organism>
    <name type="scientific">Mus musculus</name>
    <name type="common">Mouse</name>
    <dbReference type="NCBI Taxonomy" id="10090"/>
    <lineage>
        <taxon>Eukaryota</taxon>
        <taxon>Metazoa</taxon>
        <taxon>Chordata</taxon>
        <taxon>Craniata</taxon>
        <taxon>Vertebrata</taxon>
        <taxon>Euteleostomi</taxon>
        <taxon>Mammalia</taxon>
        <taxon>Eutheria</taxon>
        <taxon>Euarchontoglires</taxon>
        <taxon>Glires</taxon>
        <taxon>Rodentia</taxon>
        <taxon>Myomorpha</taxon>
        <taxon>Muroidea</taxon>
        <taxon>Muridae</taxon>
        <taxon>Murinae</taxon>
        <taxon>Mus</taxon>
        <taxon>Mus</taxon>
    </lineage>
</organism>
<name>CRGD_MOUSE</name>
<feature type="chain" id="PRO_0000057598" description="Gamma-crystallin D">
    <location>
        <begin position="1"/>
        <end position="174"/>
    </location>
</feature>
<feature type="domain" description="Beta/gamma crystallin 'Greek key' 1" evidence="1">
    <location>
        <begin position="2"/>
        <end position="40"/>
    </location>
</feature>
<feature type="domain" description="Beta/gamma crystallin 'Greek key' 2" evidence="1">
    <location>
        <begin position="41"/>
        <end position="83"/>
    </location>
</feature>
<feature type="domain" description="Beta/gamma crystallin 'Greek key' 3" evidence="1">
    <location>
        <begin position="88"/>
        <end position="128"/>
    </location>
</feature>
<feature type="domain" description="Beta/gamma crystallin 'Greek key' 4" evidence="1">
    <location>
        <begin position="129"/>
        <end position="171"/>
    </location>
</feature>
<feature type="region of interest" description="Connecting peptide">
    <location>
        <begin position="84"/>
        <end position="87"/>
    </location>
</feature>
<feature type="sequence conflict" description="In Ref. 1; AAA37475." evidence="3" ref="1">
    <original>R</original>
    <variation>H</variation>
    <location>
        <position position="32"/>
    </location>
</feature>
<feature type="sequence conflict" description="In Ref. 1; AAA37475 and 5; CAA11908." evidence="3" ref="1 5">
    <original>T</original>
    <variation>A</variation>
    <location>
        <position position="52"/>
    </location>
</feature>
<feature type="sequence conflict" description="In Ref. 1; AAA37475 and 5; CAA11908." evidence="3" ref="1 5">
    <original>M</original>
    <variation>V</variation>
    <location>
        <position position="102"/>
    </location>
</feature>
<feature type="sequence conflict" description="In Ref. 1; AAA37475." evidence="3" ref="1">
    <original>R</original>
    <variation>K</variation>
    <location>
        <position position="163"/>
    </location>
</feature>
<keyword id="KW-0273">Eye lens protein</keyword>
<keyword id="KW-1185">Reference proteome</keyword>
<keyword id="KW-0677">Repeat</keyword>